<sequence length="155" mass="18049">MQCPHCHHNSSRVVDSRPTDGGRAIRRRRECENCGFRFTTFERVEQTPLLVIKKNGTREEFNREKILKGLIRAAEKRPVTMEQMQSIVDSVENQLRAIGENEVSSQAIGEFVMSKLADVDDVAYIRFASVYRQFKDMSVFMQELQDMMKKEKTKK</sequence>
<evidence type="ECO:0000255" key="1">
    <source>
        <dbReference type="HAMAP-Rule" id="MF_00440"/>
    </source>
</evidence>
<evidence type="ECO:0000256" key="2">
    <source>
        <dbReference type="SAM" id="MobiDB-lite"/>
    </source>
</evidence>
<organism>
    <name type="scientific">Lacticaseibacillus paracasei (strain ATCC 334 / BCRC 17002 / CCUG 31169 / CIP 107868 / KCTC 3260 / NRRL B-441)</name>
    <name type="common">Lactobacillus paracasei</name>
    <dbReference type="NCBI Taxonomy" id="321967"/>
    <lineage>
        <taxon>Bacteria</taxon>
        <taxon>Bacillati</taxon>
        <taxon>Bacillota</taxon>
        <taxon>Bacilli</taxon>
        <taxon>Lactobacillales</taxon>
        <taxon>Lactobacillaceae</taxon>
        <taxon>Lacticaseibacillus</taxon>
    </lineage>
</organism>
<reference key="1">
    <citation type="journal article" date="2006" name="Proc. Natl. Acad. Sci. U.S.A.">
        <title>Comparative genomics of the lactic acid bacteria.</title>
        <authorList>
            <person name="Makarova K.S."/>
            <person name="Slesarev A."/>
            <person name="Wolf Y.I."/>
            <person name="Sorokin A."/>
            <person name="Mirkin B."/>
            <person name="Koonin E.V."/>
            <person name="Pavlov A."/>
            <person name="Pavlova N."/>
            <person name="Karamychev V."/>
            <person name="Polouchine N."/>
            <person name="Shakhova V."/>
            <person name="Grigoriev I."/>
            <person name="Lou Y."/>
            <person name="Rohksar D."/>
            <person name="Lucas S."/>
            <person name="Huang K."/>
            <person name="Goodstein D.M."/>
            <person name="Hawkins T."/>
            <person name="Plengvidhya V."/>
            <person name="Welker D."/>
            <person name="Hughes J."/>
            <person name="Goh Y."/>
            <person name="Benson A."/>
            <person name="Baldwin K."/>
            <person name="Lee J.-H."/>
            <person name="Diaz-Muniz I."/>
            <person name="Dosti B."/>
            <person name="Smeianov V."/>
            <person name="Wechter W."/>
            <person name="Barabote R."/>
            <person name="Lorca G."/>
            <person name="Altermann E."/>
            <person name="Barrangou R."/>
            <person name="Ganesan B."/>
            <person name="Xie Y."/>
            <person name="Rawsthorne H."/>
            <person name="Tamir D."/>
            <person name="Parker C."/>
            <person name="Breidt F."/>
            <person name="Broadbent J.R."/>
            <person name="Hutkins R."/>
            <person name="O'Sullivan D."/>
            <person name="Steele J."/>
            <person name="Unlu G."/>
            <person name="Saier M.H. Jr."/>
            <person name="Klaenhammer T."/>
            <person name="Richardson P."/>
            <person name="Kozyavkin S."/>
            <person name="Weimer B.C."/>
            <person name="Mills D.A."/>
        </authorList>
    </citation>
    <scope>NUCLEOTIDE SEQUENCE [LARGE SCALE GENOMIC DNA]</scope>
    <source>
        <strain>ATCC 334 / BCRC 17002 / CCUG 31169 / CIP 107868 / KCTC 3260 / NRRL B-441</strain>
    </source>
</reference>
<feature type="chain" id="PRO_1000080763" description="Transcriptional repressor NrdR">
    <location>
        <begin position="1"/>
        <end position="155"/>
    </location>
</feature>
<feature type="domain" description="ATP-cone" evidence="1">
    <location>
        <begin position="49"/>
        <end position="139"/>
    </location>
</feature>
<feature type="zinc finger region" evidence="1">
    <location>
        <begin position="3"/>
        <end position="34"/>
    </location>
</feature>
<feature type="region of interest" description="Disordered" evidence="2">
    <location>
        <begin position="1"/>
        <end position="21"/>
    </location>
</feature>
<feature type="compositionally biased region" description="Basic residues" evidence="2">
    <location>
        <begin position="1"/>
        <end position="10"/>
    </location>
</feature>
<dbReference type="EMBL" id="CP000423">
    <property type="protein sequence ID" value="ABJ70479.1"/>
    <property type="molecule type" value="Genomic_DNA"/>
</dbReference>
<dbReference type="RefSeq" id="WP_003565887.1">
    <property type="nucleotide sequence ID" value="NC_008526.1"/>
</dbReference>
<dbReference type="RefSeq" id="YP_806921.1">
    <property type="nucleotide sequence ID" value="NC_008526.1"/>
</dbReference>
<dbReference type="SMR" id="Q037Z3"/>
<dbReference type="STRING" id="321967.LSEI_1706"/>
<dbReference type="PaxDb" id="321967-LSEI_1706"/>
<dbReference type="GeneID" id="57090409"/>
<dbReference type="KEGG" id="lca:LSEI_1706"/>
<dbReference type="PATRIC" id="fig|321967.11.peg.1686"/>
<dbReference type="HOGENOM" id="CLU_108412_0_0_9"/>
<dbReference type="Proteomes" id="UP000001651">
    <property type="component" value="Chromosome"/>
</dbReference>
<dbReference type="GO" id="GO:0005524">
    <property type="term" value="F:ATP binding"/>
    <property type="evidence" value="ECO:0007669"/>
    <property type="project" value="UniProtKB-KW"/>
</dbReference>
<dbReference type="GO" id="GO:0003677">
    <property type="term" value="F:DNA binding"/>
    <property type="evidence" value="ECO:0007669"/>
    <property type="project" value="UniProtKB-KW"/>
</dbReference>
<dbReference type="GO" id="GO:0008270">
    <property type="term" value="F:zinc ion binding"/>
    <property type="evidence" value="ECO:0007669"/>
    <property type="project" value="UniProtKB-UniRule"/>
</dbReference>
<dbReference type="GO" id="GO:0045892">
    <property type="term" value="P:negative regulation of DNA-templated transcription"/>
    <property type="evidence" value="ECO:0007669"/>
    <property type="project" value="UniProtKB-UniRule"/>
</dbReference>
<dbReference type="HAMAP" id="MF_00440">
    <property type="entry name" value="NrdR"/>
    <property type="match status" value="1"/>
</dbReference>
<dbReference type="InterPro" id="IPR005144">
    <property type="entry name" value="ATP-cone_dom"/>
</dbReference>
<dbReference type="InterPro" id="IPR055173">
    <property type="entry name" value="NrdR-like_N"/>
</dbReference>
<dbReference type="InterPro" id="IPR003796">
    <property type="entry name" value="RNR_NrdR-like"/>
</dbReference>
<dbReference type="NCBIfam" id="TIGR00244">
    <property type="entry name" value="transcriptional regulator NrdR"/>
    <property type="match status" value="1"/>
</dbReference>
<dbReference type="PANTHER" id="PTHR30455">
    <property type="entry name" value="TRANSCRIPTIONAL REPRESSOR NRDR"/>
    <property type="match status" value="1"/>
</dbReference>
<dbReference type="PANTHER" id="PTHR30455:SF2">
    <property type="entry name" value="TRANSCRIPTIONAL REPRESSOR NRDR"/>
    <property type="match status" value="1"/>
</dbReference>
<dbReference type="Pfam" id="PF03477">
    <property type="entry name" value="ATP-cone"/>
    <property type="match status" value="1"/>
</dbReference>
<dbReference type="Pfam" id="PF22811">
    <property type="entry name" value="Zn_ribbon_NrdR"/>
    <property type="match status" value="1"/>
</dbReference>
<dbReference type="PROSITE" id="PS51161">
    <property type="entry name" value="ATP_CONE"/>
    <property type="match status" value="1"/>
</dbReference>
<comment type="function">
    <text evidence="1">Negatively regulates transcription of bacterial ribonucleotide reductase nrd genes and operons by binding to NrdR-boxes.</text>
</comment>
<comment type="cofactor">
    <cofactor evidence="1">
        <name>Zn(2+)</name>
        <dbReference type="ChEBI" id="CHEBI:29105"/>
    </cofactor>
    <text evidence="1">Binds 1 zinc ion.</text>
</comment>
<comment type="similarity">
    <text evidence="1">Belongs to the NrdR family.</text>
</comment>
<gene>
    <name evidence="1" type="primary">nrdR</name>
    <name type="ordered locus">LSEI_1706</name>
</gene>
<accession>Q037Z3</accession>
<keyword id="KW-0067">ATP-binding</keyword>
<keyword id="KW-0238">DNA-binding</keyword>
<keyword id="KW-0479">Metal-binding</keyword>
<keyword id="KW-0547">Nucleotide-binding</keyword>
<keyword id="KW-1185">Reference proteome</keyword>
<keyword id="KW-0678">Repressor</keyword>
<keyword id="KW-0804">Transcription</keyword>
<keyword id="KW-0805">Transcription regulation</keyword>
<keyword id="KW-0862">Zinc</keyword>
<keyword id="KW-0863">Zinc-finger</keyword>
<name>NRDR_LACP3</name>
<proteinExistence type="inferred from homology"/>
<protein>
    <recommendedName>
        <fullName evidence="1">Transcriptional repressor NrdR</fullName>
    </recommendedName>
</protein>